<proteinExistence type="evidence at protein level"/>
<comment type="function">
    <text evidence="1">Component of the cell wall involved in virulence which plays a role in the relationship between C.albicans and the host.</text>
</comment>
<comment type="subcellular location">
    <subcellularLocation>
        <location evidence="4">Secreted</location>
        <location evidence="4">Cell wall</location>
    </subcellularLocation>
    <subcellularLocation>
        <location evidence="4">Membrane</location>
        <topology evidence="4">Lipid-anchor</topology>
        <topology evidence="4">GPI-anchor</topology>
    </subcellularLocation>
</comment>
<comment type="induction">
    <text evidence="5">Up-regulated upon milbemycin A3 oxim derivative (A3Ox) treatment.</text>
</comment>
<comment type="PTM">
    <text>The GPI-anchor is attached to the protein in the endoplasmic reticulum and serves to target the protein to the cell surface. There, the glucosamine-inositol phospholipid moiety is cleaved off and the GPI-modified mannoprotein is covalently attached via its lipidless GPI glycan remnant to the 1,6-beta-glucan of the outer cell wall layer.</text>
</comment>
<comment type="similarity">
    <text evidence="6">Belongs to the SRP1/TIP1 family.</text>
</comment>
<keyword id="KW-0134">Cell wall</keyword>
<keyword id="KW-0325">Glycoprotein</keyword>
<keyword id="KW-0336">GPI-anchor</keyword>
<keyword id="KW-0449">Lipoprotein</keyword>
<keyword id="KW-0472">Membrane</keyword>
<keyword id="KW-1185">Reference proteome</keyword>
<keyword id="KW-0964">Secreted</keyword>
<keyword id="KW-0732">Signal</keyword>
<keyword id="KW-0843">Virulence</keyword>
<feature type="signal peptide" evidence="2">
    <location>
        <begin position="1"/>
        <end position="18"/>
    </location>
</feature>
<feature type="chain" id="PRO_0000424727" description="Cell wall protein PGA30">
    <location>
        <begin position="19"/>
        <end position="253"/>
    </location>
</feature>
<feature type="propeptide" id="PRO_0000424728" description="Removed in mature form" evidence="2">
    <location>
        <begin position="254"/>
        <end position="277"/>
    </location>
</feature>
<feature type="region of interest" description="Disordered" evidence="3">
    <location>
        <begin position="219"/>
        <end position="246"/>
    </location>
</feature>
<feature type="compositionally biased region" description="Polar residues" evidence="3">
    <location>
        <begin position="234"/>
        <end position="246"/>
    </location>
</feature>
<feature type="lipid moiety-binding region" description="GPI-anchor amidated glycine" evidence="2">
    <location>
        <position position="253"/>
    </location>
</feature>
<feature type="glycosylation site" description="N-linked (GlcNAc...) asparagine" evidence="2">
    <location>
        <position position="129"/>
    </location>
</feature>
<feature type="glycosylation site" description="N-linked (GlcNAc...) asparagine" evidence="2">
    <location>
        <position position="178"/>
    </location>
</feature>
<accession>Q5A5U6</accession>
<accession>A0A1D8PLZ1</accession>
<gene>
    <name type="primary">PGA30</name>
    <name type="synonym">LDG6</name>
    <name type="ordered locus">CAALFM_C404070CA</name>
    <name type="ORF">CaO19.12763</name>
    <name type="ORF">CaO19.5303</name>
</gene>
<evidence type="ECO:0000250" key="1"/>
<evidence type="ECO:0000255" key="2"/>
<evidence type="ECO:0000256" key="3">
    <source>
        <dbReference type="SAM" id="MobiDB-lite"/>
    </source>
</evidence>
<evidence type="ECO:0000269" key="4">
    <source>
    </source>
</evidence>
<evidence type="ECO:0000269" key="5">
    <source>
    </source>
</evidence>
<evidence type="ECO:0000305" key="6"/>
<organism>
    <name type="scientific">Candida albicans (strain SC5314 / ATCC MYA-2876)</name>
    <name type="common">Yeast</name>
    <dbReference type="NCBI Taxonomy" id="237561"/>
    <lineage>
        <taxon>Eukaryota</taxon>
        <taxon>Fungi</taxon>
        <taxon>Dikarya</taxon>
        <taxon>Ascomycota</taxon>
        <taxon>Saccharomycotina</taxon>
        <taxon>Pichiomycetes</taxon>
        <taxon>Debaryomycetaceae</taxon>
        <taxon>Candida/Lodderomyces clade</taxon>
        <taxon>Candida</taxon>
    </lineage>
</organism>
<sequence>MKYFTIATVLTLASSALAAIRDVQLFAQSSNEEINNLGLISRREGAGVNYLFLASGAETLKFDDETFTIFSELQTGSTTARQSLVVSGGVVQLSVSGQPLHVEIAEDGSVKFAGSDSVAAAKNINDPYNYSKDSFAVVTNGGEGSIPFKIIAKFIGGGKSSSVTKHTEAPTTSPVYSNKTVTVFTTYCPESTTITLTICSEVCTPTVIETSGSVTVSSVLPSSSTEAPPKTSVAAPSTTAEAQTTAPVTSYEGGANEIVGGGSMAIALAAAAIGLVI</sequence>
<dbReference type="EMBL" id="CP017626">
    <property type="protein sequence ID" value="AOW29156.1"/>
    <property type="molecule type" value="Genomic_DNA"/>
</dbReference>
<dbReference type="RefSeq" id="XP_717106.1">
    <property type="nucleotide sequence ID" value="XM_712013.1"/>
</dbReference>
<dbReference type="STRING" id="237561.Q5A5U6"/>
<dbReference type="GlyCosmos" id="Q5A5U6">
    <property type="glycosylation" value="2 sites, No reported glycans"/>
</dbReference>
<dbReference type="EnsemblFungi" id="C4_04070C_A-T">
    <property type="protein sequence ID" value="C4_04070C_A-T-p1"/>
    <property type="gene ID" value="C4_04070C_A"/>
</dbReference>
<dbReference type="GeneID" id="3641227"/>
<dbReference type="KEGG" id="cal:CAALFM_C404070CA"/>
<dbReference type="CGD" id="CAL0000200830">
    <property type="gene designation" value="PGA30"/>
</dbReference>
<dbReference type="VEuPathDB" id="FungiDB:C4_04070C_A"/>
<dbReference type="eggNOG" id="ENOG502SXWZ">
    <property type="taxonomic scope" value="Eukaryota"/>
</dbReference>
<dbReference type="HOGENOM" id="CLU_083354_0_0_1"/>
<dbReference type="InParanoid" id="Q5A5U6"/>
<dbReference type="OMA" id="TITEKCV"/>
<dbReference type="OrthoDB" id="4018368at2759"/>
<dbReference type="PRO" id="PR:Q5A5U6"/>
<dbReference type="Proteomes" id="UP000000559">
    <property type="component" value="Chromosome 4"/>
</dbReference>
<dbReference type="GO" id="GO:0009986">
    <property type="term" value="C:cell surface"/>
    <property type="evidence" value="ECO:0000314"/>
    <property type="project" value="CGD"/>
</dbReference>
<dbReference type="GO" id="GO:0005576">
    <property type="term" value="C:extracellular region"/>
    <property type="evidence" value="ECO:0007669"/>
    <property type="project" value="UniProtKB-KW"/>
</dbReference>
<dbReference type="GO" id="GO:0030446">
    <property type="term" value="C:hyphal cell wall"/>
    <property type="evidence" value="ECO:0000314"/>
    <property type="project" value="CGD"/>
</dbReference>
<dbReference type="GO" id="GO:0098552">
    <property type="term" value="C:side of membrane"/>
    <property type="evidence" value="ECO:0007669"/>
    <property type="project" value="UniProtKB-KW"/>
</dbReference>
<dbReference type="GO" id="GO:0030445">
    <property type="term" value="C:yeast-form cell wall"/>
    <property type="evidence" value="ECO:0000314"/>
    <property type="project" value="CGD"/>
</dbReference>
<protein>
    <recommendedName>
        <fullName>Cell wall protein PGA30</fullName>
    </recommendedName>
    <alternativeName>
        <fullName>GPI-anchored protein 30</fullName>
    </alternativeName>
    <alternativeName>
        <fullName>LDG family protein 6</fullName>
    </alternativeName>
</protein>
<reference key="1">
    <citation type="journal article" date="2004" name="Proc. Natl. Acad. Sci. U.S.A.">
        <title>The diploid genome sequence of Candida albicans.</title>
        <authorList>
            <person name="Jones T."/>
            <person name="Federspiel N.A."/>
            <person name="Chibana H."/>
            <person name="Dungan J."/>
            <person name="Kalman S."/>
            <person name="Magee B.B."/>
            <person name="Newport G."/>
            <person name="Thorstenson Y.R."/>
            <person name="Agabian N."/>
            <person name="Magee P.T."/>
            <person name="Davis R.W."/>
            <person name="Scherer S."/>
        </authorList>
    </citation>
    <scope>NUCLEOTIDE SEQUENCE [LARGE SCALE GENOMIC DNA]</scope>
    <source>
        <strain>SC5314 / ATCC MYA-2876</strain>
    </source>
</reference>
<reference key="2">
    <citation type="journal article" date="2007" name="Genome Biol.">
        <title>Assembly of the Candida albicans genome into sixteen supercontigs aligned on the eight chromosomes.</title>
        <authorList>
            <person name="van het Hoog M."/>
            <person name="Rast T.J."/>
            <person name="Martchenko M."/>
            <person name="Grindle S."/>
            <person name="Dignard D."/>
            <person name="Hogues H."/>
            <person name="Cuomo C."/>
            <person name="Berriman M."/>
            <person name="Scherer S."/>
            <person name="Magee B.B."/>
            <person name="Whiteway M."/>
            <person name="Chibana H."/>
            <person name="Nantel A."/>
            <person name="Magee P.T."/>
        </authorList>
    </citation>
    <scope>GENOME REANNOTATION</scope>
    <source>
        <strain>SC5314 / ATCC MYA-2876</strain>
    </source>
</reference>
<reference key="3">
    <citation type="journal article" date="2013" name="Genome Biol.">
        <title>Assembly of a phased diploid Candida albicans genome facilitates allele-specific measurements and provides a simple model for repeat and indel structure.</title>
        <authorList>
            <person name="Muzzey D."/>
            <person name="Schwartz K."/>
            <person name="Weissman J.S."/>
            <person name="Sherlock G."/>
        </authorList>
    </citation>
    <scope>NUCLEOTIDE SEQUENCE [LARGE SCALE GENOMIC DNA]</scope>
    <scope>GENOME REANNOTATION</scope>
    <source>
        <strain>SC5314 / ATCC MYA-2876</strain>
    </source>
</reference>
<reference key="4">
    <citation type="journal article" date="2003" name="Yeast">
        <title>Genome-wide identification of fungal GPI proteins.</title>
        <authorList>
            <person name="De Groot P.W."/>
            <person name="Hellingwerf K.J."/>
            <person name="Klis F.M."/>
        </authorList>
    </citation>
    <scope>PREDICTION OF GPI-ANCHOR</scope>
</reference>
<reference key="5">
    <citation type="journal article" date="2008" name="Proteomics">
        <title>A study of the Candida albicans cell wall proteome.</title>
        <authorList>
            <person name="Castillo L."/>
            <person name="Calvo E."/>
            <person name="Martinez A.I."/>
            <person name="Ruiz-Herrera J."/>
            <person name="Valentin E."/>
            <person name="Lopez J.A."/>
            <person name="Sentandreu R."/>
        </authorList>
    </citation>
    <scope>IDENTIFICATION BY MASS SPECTROMETRY</scope>
    <scope>SUBCELLULAR LOCATION</scope>
</reference>
<reference key="6">
    <citation type="journal article" date="2013" name="Antimicrob. Agents Chemother.">
        <title>Milbemycins: more than efflux inhibitors for fungal pathogens.</title>
        <authorList>
            <person name="Silva L.V."/>
            <person name="Sanguinetti M."/>
            <person name="Vandeputte P."/>
            <person name="Torelli R."/>
            <person name="Rochat B."/>
            <person name="Sanglard D."/>
        </authorList>
    </citation>
    <scope>INDUCTION</scope>
</reference>
<name>PGA30_CANAL</name>